<organism>
    <name type="scientific">Colwellia psychrerythraea (strain 34H / ATCC BAA-681)</name>
    <name type="common">Vibrio psychroerythus</name>
    <dbReference type="NCBI Taxonomy" id="167879"/>
    <lineage>
        <taxon>Bacteria</taxon>
        <taxon>Pseudomonadati</taxon>
        <taxon>Pseudomonadota</taxon>
        <taxon>Gammaproteobacteria</taxon>
        <taxon>Alteromonadales</taxon>
        <taxon>Colwelliaceae</taxon>
        <taxon>Colwellia</taxon>
    </lineage>
</organism>
<comment type="function">
    <text evidence="1">Part of a membrane-bound complex that couples electron transfer with translocation of ions across the membrane.</text>
</comment>
<comment type="subunit">
    <text evidence="1">The complex is composed of six subunits: RnfA, RnfB, RnfC, RnfD, RnfE and RnfG.</text>
</comment>
<comment type="subcellular location">
    <subcellularLocation>
        <location evidence="1">Cell inner membrane</location>
        <topology evidence="1">Multi-pass membrane protein</topology>
    </subcellularLocation>
</comment>
<comment type="similarity">
    <text evidence="1">Belongs to the NqrDE/RnfAE family.</text>
</comment>
<protein>
    <recommendedName>
        <fullName evidence="1">Ion-translocating oxidoreductase complex subunit A</fullName>
        <ecNumber evidence="1">7.-.-.-</ecNumber>
    </recommendedName>
    <alternativeName>
        <fullName evidence="1">Rnf electron transport complex subunit A</fullName>
    </alternativeName>
</protein>
<proteinExistence type="inferred from homology"/>
<sequence length="193" mass="20883">MTDYLLLLVGTVLVNNFVLVQFLGLCPFMGVSSRTETAIGMSFATVFVMTLASLLSYLVTTYLLVPLNLEYLTTMSFILVIAVVVQFTEMVVHKTSASLYRLLGIFLPLITTNCAVLGVALLNLRLQHGFFESIIYGFGAALGFSLVLIMFSAMREKLANADVPAPFKGTAIAMITAGLMSLAFLGFTGLVKI</sequence>
<dbReference type="EC" id="7.-.-.-" evidence="1"/>
<dbReference type="EMBL" id="CP000083">
    <property type="protein sequence ID" value="AAZ26517.1"/>
    <property type="molecule type" value="Genomic_DNA"/>
</dbReference>
<dbReference type="SMR" id="Q482U3"/>
<dbReference type="STRING" id="167879.CPS_2199"/>
<dbReference type="KEGG" id="cps:CPS_2199"/>
<dbReference type="eggNOG" id="COG4657">
    <property type="taxonomic scope" value="Bacteria"/>
</dbReference>
<dbReference type="HOGENOM" id="CLU_095255_1_0_6"/>
<dbReference type="Proteomes" id="UP000000547">
    <property type="component" value="Chromosome"/>
</dbReference>
<dbReference type="GO" id="GO:0005886">
    <property type="term" value="C:plasma membrane"/>
    <property type="evidence" value="ECO:0007669"/>
    <property type="project" value="UniProtKB-SubCell"/>
</dbReference>
<dbReference type="GO" id="GO:0022900">
    <property type="term" value="P:electron transport chain"/>
    <property type="evidence" value="ECO:0007669"/>
    <property type="project" value="UniProtKB-UniRule"/>
</dbReference>
<dbReference type="HAMAP" id="MF_00459">
    <property type="entry name" value="RsxA_RnfA"/>
    <property type="match status" value="1"/>
</dbReference>
<dbReference type="InterPro" id="IPR011293">
    <property type="entry name" value="Ion_transpt_RnfA/RsxA"/>
</dbReference>
<dbReference type="InterPro" id="IPR003667">
    <property type="entry name" value="NqrDE/RnfAE"/>
</dbReference>
<dbReference type="InterPro" id="IPR050133">
    <property type="entry name" value="NqrDE/RnfAE_oxidrdctase"/>
</dbReference>
<dbReference type="NCBIfam" id="NF003481">
    <property type="entry name" value="PRK05151.1"/>
    <property type="match status" value="1"/>
</dbReference>
<dbReference type="NCBIfam" id="TIGR01943">
    <property type="entry name" value="rnfA"/>
    <property type="match status" value="1"/>
</dbReference>
<dbReference type="PANTHER" id="PTHR30335">
    <property type="entry name" value="INTEGRAL MEMBRANE PROTEIN OF SOXR-REDUCING COMPLEX"/>
    <property type="match status" value="1"/>
</dbReference>
<dbReference type="PANTHER" id="PTHR30335:SF0">
    <property type="entry name" value="ION-TRANSLOCATING OXIDOREDUCTASE COMPLEX SUBUNIT A"/>
    <property type="match status" value="1"/>
</dbReference>
<dbReference type="Pfam" id="PF02508">
    <property type="entry name" value="Rnf-Nqr"/>
    <property type="match status" value="1"/>
</dbReference>
<dbReference type="PIRSF" id="PIRSF006102">
    <property type="entry name" value="NQR_DE"/>
    <property type="match status" value="1"/>
</dbReference>
<accession>Q482U3</accession>
<gene>
    <name evidence="1" type="primary">rnfA</name>
    <name type="ordered locus">CPS_2199</name>
</gene>
<reference key="1">
    <citation type="journal article" date="2005" name="Proc. Natl. Acad. Sci. U.S.A.">
        <title>The psychrophilic lifestyle as revealed by the genome sequence of Colwellia psychrerythraea 34H through genomic and proteomic analyses.</title>
        <authorList>
            <person name="Methe B.A."/>
            <person name="Nelson K.E."/>
            <person name="Deming J.W."/>
            <person name="Momen B."/>
            <person name="Melamud E."/>
            <person name="Zhang X."/>
            <person name="Moult J."/>
            <person name="Madupu R."/>
            <person name="Nelson W.C."/>
            <person name="Dodson R.J."/>
            <person name="Brinkac L.M."/>
            <person name="Daugherty S.C."/>
            <person name="Durkin A.S."/>
            <person name="DeBoy R.T."/>
            <person name="Kolonay J.F."/>
            <person name="Sullivan S.A."/>
            <person name="Zhou L."/>
            <person name="Davidsen T.M."/>
            <person name="Wu M."/>
            <person name="Huston A.L."/>
            <person name="Lewis M."/>
            <person name="Weaver B."/>
            <person name="Weidman J.F."/>
            <person name="Khouri H."/>
            <person name="Utterback T.R."/>
            <person name="Feldblyum T.V."/>
            <person name="Fraser C.M."/>
        </authorList>
    </citation>
    <scope>NUCLEOTIDE SEQUENCE [LARGE SCALE GENOMIC DNA]</scope>
    <source>
        <strain>34H / ATCC BAA-681</strain>
    </source>
</reference>
<evidence type="ECO:0000255" key="1">
    <source>
        <dbReference type="HAMAP-Rule" id="MF_00459"/>
    </source>
</evidence>
<name>RNFA_COLP3</name>
<feature type="chain" id="PRO_1000013524" description="Ion-translocating oxidoreductase complex subunit A">
    <location>
        <begin position="1"/>
        <end position="193"/>
    </location>
</feature>
<feature type="transmembrane region" description="Helical" evidence="1">
    <location>
        <begin position="5"/>
        <end position="25"/>
    </location>
</feature>
<feature type="transmembrane region" description="Helical" evidence="1">
    <location>
        <begin position="39"/>
        <end position="59"/>
    </location>
</feature>
<feature type="transmembrane region" description="Helical" evidence="1">
    <location>
        <begin position="72"/>
        <end position="92"/>
    </location>
</feature>
<feature type="transmembrane region" description="Helical" evidence="1">
    <location>
        <begin position="102"/>
        <end position="122"/>
    </location>
</feature>
<feature type="transmembrane region" description="Helical" evidence="1">
    <location>
        <begin position="134"/>
        <end position="154"/>
    </location>
</feature>
<feature type="transmembrane region" description="Helical" evidence="1">
    <location>
        <begin position="171"/>
        <end position="191"/>
    </location>
</feature>
<keyword id="KW-0997">Cell inner membrane</keyword>
<keyword id="KW-1003">Cell membrane</keyword>
<keyword id="KW-0249">Electron transport</keyword>
<keyword id="KW-0472">Membrane</keyword>
<keyword id="KW-1278">Translocase</keyword>
<keyword id="KW-0812">Transmembrane</keyword>
<keyword id="KW-1133">Transmembrane helix</keyword>
<keyword id="KW-0813">Transport</keyword>